<organism>
    <name type="scientific">Cupriavidus necator (strain ATCC 17699 / DSM 428 / KCTC 22496 / NCIMB 10442 / H16 / Stanier 337)</name>
    <name type="common">Ralstonia eutropha</name>
    <dbReference type="NCBI Taxonomy" id="381666"/>
    <lineage>
        <taxon>Bacteria</taxon>
        <taxon>Pseudomonadati</taxon>
        <taxon>Pseudomonadota</taxon>
        <taxon>Betaproteobacteria</taxon>
        <taxon>Burkholderiales</taxon>
        <taxon>Burkholderiaceae</taxon>
        <taxon>Cupriavidus</taxon>
    </lineage>
</organism>
<evidence type="ECO:0000255" key="1">
    <source>
        <dbReference type="HAMAP-Rule" id="MF_00262"/>
    </source>
</evidence>
<protein>
    <recommendedName>
        <fullName evidence="1">Cell division topological specificity factor</fullName>
    </recommendedName>
</protein>
<accession>Q0KFI5</accession>
<gene>
    <name evidence="1" type="primary">minE</name>
    <name type="ordered locus">H16_A0084</name>
</gene>
<sequence length="84" mass="9452">MSILSFLLGEKKKSASVAKERLQIILAHERTGHSAPADYLPALQRELVAVISKYVKIGDQDLRVSLERQDNLEVLEVKIEIPQN</sequence>
<dbReference type="EMBL" id="AM260479">
    <property type="protein sequence ID" value="CAJ91236.1"/>
    <property type="molecule type" value="Genomic_DNA"/>
</dbReference>
<dbReference type="RefSeq" id="WP_010811451.1">
    <property type="nucleotide sequence ID" value="NZ_CP039287.1"/>
</dbReference>
<dbReference type="SMR" id="Q0KFI5"/>
<dbReference type="STRING" id="381666.H16_A0084"/>
<dbReference type="GeneID" id="34310596"/>
<dbReference type="KEGG" id="reh:H16_A0084"/>
<dbReference type="eggNOG" id="COG0851">
    <property type="taxonomic scope" value="Bacteria"/>
</dbReference>
<dbReference type="HOGENOM" id="CLU_137929_2_1_4"/>
<dbReference type="OrthoDB" id="9802655at2"/>
<dbReference type="Proteomes" id="UP000008210">
    <property type="component" value="Chromosome 1"/>
</dbReference>
<dbReference type="GO" id="GO:0051301">
    <property type="term" value="P:cell division"/>
    <property type="evidence" value="ECO:0007669"/>
    <property type="project" value="UniProtKB-KW"/>
</dbReference>
<dbReference type="GO" id="GO:0032955">
    <property type="term" value="P:regulation of division septum assembly"/>
    <property type="evidence" value="ECO:0007669"/>
    <property type="project" value="InterPro"/>
</dbReference>
<dbReference type="FunFam" id="3.30.1070.10:FF:000001">
    <property type="entry name" value="Cell division topological specificity factor"/>
    <property type="match status" value="1"/>
</dbReference>
<dbReference type="Gene3D" id="3.30.1070.10">
    <property type="entry name" value="Cell division topological specificity factor MinE"/>
    <property type="match status" value="1"/>
</dbReference>
<dbReference type="HAMAP" id="MF_00262">
    <property type="entry name" value="MinE"/>
    <property type="match status" value="1"/>
</dbReference>
<dbReference type="InterPro" id="IPR005527">
    <property type="entry name" value="MinE"/>
</dbReference>
<dbReference type="InterPro" id="IPR036707">
    <property type="entry name" value="MinE_sf"/>
</dbReference>
<dbReference type="NCBIfam" id="TIGR01215">
    <property type="entry name" value="minE"/>
    <property type="match status" value="1"/>
</dbReference>
<dbReference type="NCBIfam" id="NF001422">
    <property type="entry name" value="PRK00296.1"/>
    <property type="match status" value="1"/>
</dbReference>
<dbReference type="NCBIfam" id="NF010595">
    <property type="entry name" value="PRK13989.1"/>
    <property type="match status" value="1"/>
</dbReference>
<dbReference type="Pfam" id="PF03776">
    <property type="entry name" value="MinE"/>
    <property type="match status" value="1"/>
</dbReference>
<dbReference type="SUPFAM" id="SSF55229">
    <property type="entry name" value="Cell division protein MinE topological specificity domain"/>
    <property type="match status" value="1"/>
</dbReference>
<reference key="1">
    <citation type="journal article" date="2006" name="Nat. Biotechnol.">
        <title>Genome sequence of the bioplastic-producing 'Knallgas' bacterium Ralstonia eutropha H16.</title>
        <authorList>
            <person name="Pohlmann A."/>
            <person name="Fricke W.F."/>
            <person name="Reinecke F."/>
            <person name="Kusian B."/>
            <person name="Liesegang H."/>
            <person name="Cramm R."/>
            <person name="Eitinger T."/>
            <person name="Ewering C."/>
            <person name="Poetter M."/>
            <person name="Schwartz E."/>
            <person name="Strittmatter A."/>
            <person name="Voss I."/>
            <person name="Gottschalk G."/>
            <person name="Steinbuechel A."/>
            <person name="Friedrich B."/>
            <person name="Bowien B."/>
        </authorList>
    </citation>
    <scope>NUCLEOTIDE SEQUENCE [LARGE SCALE GENOMIC DNA]</scope>
    <source>
        <strain>ATCC 17699 / DSM 428 / KCTC 22496 / NCIMB 10442 / H16 / Stanier 337</strain>
    </source>
</reference>
<keyword id="KW-0131">Cell cycle</keyword>
<keyword id="KW-0132">Cell division</keyword>
<keyword id="KW-1185">Reference proteome</keyword>
<comment type="function">
    <text evidence="1">Prevents the cell division inhibition by proteins MinC and MinD at internal division sites while permitting inhibition at polar sites. This ensures cell division at the proper site by restricting the formation of a division septum at the midpoint of the long axis of the cell.</text>
</comment>
<comment type="similarity">
    <text evidence="1">Belongs to the MinE family.</text>
</comment>
<name>MINE_CUPNH</name>
<proteinExistence type="inferred from homology"/>
<feature type="chain" id="PRO_0000298169" description="Cell division topological specificity factor">
    <location>
        <begin position="1"/>
        <end position="84"/>
    </location>
</feature>